<feature type="initiator methionine" description="Removed" evidence="6">
    <location>
        <position position="1"/>
    </location>
</feature>
<feature type="chain" id="PRO_0000204312" description="DNA-directed RNA polymerase subunit delta">
    <location>
        <begin position="2"/>
        <end position="173"/>
    </location>
</feature>
<feature type="domain" description="HTH HARE-type" evidence="1">
    <location>
        <begin position="14"/>
        <end position="81"/>
    </location>
</feature>
<feature type="region of interest" description="Disordered" evidence="2">
    <location>
        <begin position="110"/>
        <end position="173"/>
    </location>
</feature>
<feature type="strand" evidence="12">
    <location>
        <begin position="3"/>
        <end position="6"/>
    </location>
</feature>
<feature type="helix" evidence="11">
    <location>
        <begin position="8"/>
        <end position="13"/>
    </location>
</feature>
<feature type="helix" evidence="11">
    <location>
        <begin position="16"/>
        <end position="27"/>
    </location>
</feature>
<feature type="helix" evidence="11">
    <location>
        <begin position="33"/>
        <end position="43"/>
    </location>
</feature>
<feature type="strand" evidence="13">
    <location>
        <begin position="44"/>
        <end position="46"/>
    </location>
</feature>
<feature type="helix" evidence="11">
    <location>
        <begin position="48"/>
        <end position="54"/>
    </location>
</feature>
<feature type="helix" evidence="11">
    <location>
        <begin position="55"/>
        <end position="64"/>
    </location>
</feature>
<feature type="strand" evidence="13">
    <location>
        <begin position="69"/>
        <end position="74"/>
    </location>
</feature>
<feature type="strand" evidence="12">
    <location>
        <begin position="75"/>
        <end position="77"/>
    </location>
</feature>
<feature type="helix" evidence="11">
    <location>
        <begin position="79"/>
        <end position="81"/>
    </location>
</feature>
<feature type="helix" evidence="13">
    <location>
        <begin position="84"/>
        <end position="91"/>
    </location>
</feature>
<gene>
    <name evidence="9" type="primary">rpoE</name>
    <name type="ordered locus">BSU37160</name>
</gene>
<organism>
    <name type="scientific">Bacillus subtilis (strain 168)</name>
    <dbReference type="NCBI Taxonomy" id="224308"/>
    <lineage>
        <taxon>Bacteria</taxon>
        <taxon>Bacillati</taxon>
        <taxon>Bacillota</taxon>
        <taxon>Bacilli</taxon>
        <taxon>Bacillales</taxon>
        <taxon>Bacillaceae</taxon>
        <taxon>Bacillus</taxon>
    </lineage>
</organism>
<sequence length="173" mass="20399">MGIKQYSQEELKEMALVEIAHELFEEHKKPVPFQELLNEIASLLGVKKEELGDRIAQFYTDLNIDGRFLALSDQTWGLRSWYPYDQLDEETQPTVKAKKKKAKKAVEEDLDLDEFEEIDEDDLDLDEVEEELDLEADDFDEEDLDEDDDDLEIEEDIIDEDDEDYDDEEEEIK</sequence>
<comment type="function">
    <text evidence="3 8">Participates in both the initiation and recycling phases of transcription. In the presence of the delta subunit, RNAP displays an increased specificity of transcription, a decreased affinity for nucleic acids, and an increased efficiency of RNA synthesis because of enhanced recycling. May function in sigma factor switching. It displaces RNA bound to RNA polymerase in a binary complex.</text>
</comment>
<comment type="subunit">
    <text evidence="4 5 7">RNAP is composed of a core of 2 alpha, a beta and a beta' subunit. The core is associated with a delta subunit, and at least one of epsilon or omega (PubMed:18289874, PubMed:21710567, PubMed:6802805). When a sigma factor is associated with the core the holoenzyme is formed, which can initiate transcription (PubMed:18289874).</text>
</comment>
<comment type="disruption phenotype">
    <text evidence="6">No visible phenotype; grows as well as wild-type at 25-49 degrees Celsius, no apparent impairment in sporulation or phage SP01 growth.</text>
</comment>
<comment type="similarity">
    <text evidence="10">Belongs to the RpoE family.</text>
</comment>
<evidence type="ECO:0000255" key="1">
    <source>
        <dbReference type="PROSITE-ProRule" id="PRU01261"/>
    </source>
</evidence>
<evidence type="ECO:0000256" key="2">
    <source>
        <dbReference type="SAM" id="MobiDB-lite"/>
    </source>
</evidence>
<evidence type="ECO:0000269" key="3">
    <source>
    </source>
</evidence>
<evidence type="ECO:0000269" key="4">
    <source>
    </source>
</evidence>
<evidence type="ECO:0000269" key="5">
    <source>
    </source>
</evidence>
<evidence type="ECO:0000269" key="6">
    <source>
    </source>
</evidence>
<evidence type="ECO:0000269" key="7">
    <source>
    </source>
</evidence>
<evidence type="ECO:0000269" key="8">
    <source>
    </source>
</evidence>
<evidence type="ECO:0000303" key="9">
    <source>
    </source>
</evidence>
<evidence type="ECO:0000305" key="10"/>
<evidence type="ECO:0007829" key="11">
    <source>
        <dbReference type="PDB" id="4NC7"/>
    </source>
</evidence>
<evidence type="ECO:0007829" key="12">
    <source>
        <dbReference type="PDB" id="8XA6"/>
    </source>
</evidence>
<evidence type="ECO:0007829" key="13">
    <source>
        <dbReference type="PDB" id="8XA7"/>
    </source>
</evidence>
<accession>P12464</accession>
<dbReference type="EMBL" id="M21677">
    <property type="protein sequence ID" value="AAA22710.1"/>
    <property type="molecule type" value="Genomic_DNA"/>
</dbReference>
<dbReference type="EMBL" id="Z49782">
    <property type="protein sequence ID" value="CAA89869.1"/>
    <property type="molecule type" value="Genomic_DNA"/>
</dbReference>
<dbReference type="EMBL" id="AL009126">
    <property type="protein sequence ID" value="CAB15744.1"/>
    <property type="molecule type" value="Genomic_DNA"/>
</dbReference>
<dbReference type="EMBL" id="M22039">
    <property type="protein sequence ID" value="AAA16800.1"/>
    <property type="molecule type" value="Unassigned_DNA"/>
</dbReference>
<dbReference type="PIR" id="JT0302">
    <property type="entry name" value="JT0302"/>
</dbReference>
<dbReference type="RefSeq" id="NP_391597.1">
    <property type="nucleotide sequence ID" value="NC_000964.3"/>
</dbReference>
<dbReference type="RefSeq" id="WP_003243661.1">
    <property type="nucleotide sequence ID" value="NZ_OZ025638.1"/>
</dbReference>
<dbReference type="PDB" id="2KRC">
    <property type="method" value="NMR"/>
    <property type="chains" value="A=2-92"/>
</dbReference>
<dbReference type="PDB" id="2M4K">
    <property type="method" value="NMR"/>
    <property type="chains" value="A=2-173"/>
</dbReference>
<dbReference type="PDB" id="4NC7">
    <property type="method" value="X-ray"/>
    <property type="resolution" value="2.00 A"/>
    <property type="chains" value="A/B=2-92"/>
</dbReference>
<dbReference type="PDB" id="4NC8">
    <property type="method" value="X-ray"/>
    <property type="resolution" value="2.17 A"/>
    <property type="chains" value="A/B=2-92"/>
</dbReference>
<dbReference type="PDB" id="6ZCA">
    <property type="method" value="EM"/>
    <property type="resolution" value="4.20 A"/>
    <property type="chains" value="D=1-92"/>
</dbReference>
<dbReference type="PDB" id="6ZFB">
    <property type="method" value="EM"/>
    <property type="resolution" value="3.90 A"/>
    <property type="chains" value="D/d=1-173"/>
</dbReference>
<dbReference type="PDB" id="7F75">
    <property type="method" value="EM"/>
    <property type="resolution" value="4.20 A"/>
    <property type="chains" value="L=1-173"/>
</dbReference>
<dbReference type="PDB" id="8XA6">
    <property type="method" value="EM"/>
    <property type="resolution" value="3.02 A"/>
    <property type="chains" value="L=1-173"/>
</dbReference>
<dbReference type="PDB" id="8XA7">
    <property type="method" value="EM"/>
    <property type="resolution" value="2.94 A"/>
    <property type="chains" value="L=1-173"/>
</dbReference>
<dbReference type="PDB" id="8XA8">
    <property type="method" value="EM"/>
    <property type="resolution" value="3.19 A"/>
    <property type="chains" value="I=1-173"/>
</dbReference>
<dbReference type="PDBsum" id="2KRC"/>
<dbReference type="PDBsum" id="2M4K"/>
<dbReference type="PDBsum" id="4NC7"/>
<dbReference type="PDBsum" id="4NC8"/>
<dbReference type="PDBsum" id="6ZCA"/>
<dbReference type="PDBsum" id="6ZFB"/>
<dbReference type="PDBsum" id="7F75"/>
<dbReference type="PDBsum" id="8XA6"/>
<dbReference type="PDBsum" id="8XA7"/>
<dbReference type="PDBsum" id="8XA8"/>
<dbReference type="BMRB" id="P12464"/>
<dbReference type="EMDB" id="EMD-31485"/>
<dbReference type="EMDB" id="EMD-38195"/>
<dbReference type="EMDB" id="EMD-38196"/>
<dbReference type="EMDB" id="EMD-38197"/>
<dbReference type="SASBDB" id="P12464"/>
<dbReference type="SMR" id="P12464"/>
<dbReference type="FunCoup" id="P12464">
    <property type="interactions" value="12"/>
</dbReference>
<dbReference type="STRING" id="224308.BSU37160"/>
<dbReference type="PaxDb" id="224308-BSU37160"/>
<dbReference type="EnsemblBacteria" id="CAB15744">
    <property type="protein sequence ID" value="CAB15744"/>
    <property type="gene ID" value="BSU_37160"/>
</dbReference>
<dbReference type="GeneID" id="937046"/>
<dbReference type="KEGG" id="bsu:BSU37160"/>
<dbReference type="PATRIC" id="fig|224308.179.peg.4025"/>
<dbReference type="eggNOG" id="COG3343">
    <property type="taxonomic scope" value="Bacteria"/>
</dbReference>
<dbReference type="InParanoid" id="P12464"/>
<dbReference type="OrthoDB" id="401223at2"/>
<dbReference type="PhylomeDB" id="P12464"/>
<dbReference type="BioCyc" id="BSUB:BSU37160-MONOMER"/>
<dbReference type="EvolutionaryTrace" id="P12464"/>
<dbReference type="Proteomes" id="UP000001570">
    <property type="component" value="Chromosome"/>
</dbReference>
<dbReference type="GO" id="GO:0000428">
    <property type="term" value="C:DNA-directed RNA polymerase complex"/>
    <property type="evidence" value="ECO:0007669"/>
    <property type="project" value="UniProtKB-KW"/>
</dbReference>
<dbReference type="GO" id="GO:0003899">
    <property type="term" value="F:DNA-directed RNA polymerase activity"/>
    <property type="evidence" value="ECO:0007669"/>
    <property type="project" value="UniProtKB-UniRule"/>
</dbReference>
<dbReference type="GO" id="GO:0006351">
    <property type="term" value="P:DNA-templated transcription"/>
    <property type="evidence" value="ECO:0007669"/>
    <property type="project" value="InterPro"/>
</dbReference>
<dbReference type="GO" id="GO:0006355">
    <property type="term" value="P:regulation of DNA-templated transcription"/>
    <property type="evidence" value="ECO:0007669"/>
    <property type="project" value="UniProtKB-UniRule"/>
</dbReference>
<dbReference type="Gene3D" id="1.10.10.1250">
    <property type="entry name" value="RNA polymerase, subunit delta, N-terminal domain"/>
    <property type="match status" value="1"/>
</dbReference>
<dbReference type="HAMAP" id="MF_00357">
    <property type="entry name" value="RNApol_bact_RpoE"/>
    <property type="match status" value="1"/>
</dbReference>
<dbReference type="InterPro" id="IPR007759">
    <property type="entry name" value="Asxl_HARE-HTH"/>
</dbReference>
<dbReference type="InterPro" id="IPR038087">
    <property type="entry name" value="RNAP_delta_N_dom_sf"/>
</dbReference>
<dbReference type="InterPro" id="IPR029757">
    <property type="entry name" value="RpoE"/>
</dbReference>
<dbReference type="NCBIfam" id="TIGR04567">
    <property type="entry name" value="RNAP_delt_lowGC"/>
    <property type="match status" value="1"/>
</dbReference>
<dbReference type="Pfam" id="PF05066">
    <property type="entry name" value="HARE-HTH"/>
    <property type="match status" value="1"/>
</dbReference>
<dbReference type="PROSITE" id="PS51913">
    <property type="entry name" value="HTH_HARE"/>
    <property type="match status" value="1"/>
</dbReference>
<proteinExistence type="evidence at protein level"/>
<reference key="1">
    <citation type="journal article" date="1988" name="Gene">
        <title>Cloned gene encoding the delta subunit of Bacillus subtilis RNA polymerase.</title>
        <authorList>
            <person name="Lampe M."/>
            <person name="Binnie C."/>
            <person name="Schmidt R."/>
            <person name="Losick R."/>
        </authorList>
    </citation>
    <scope>NUCLEOTIDE SEQUENCE [GENOMIC DNA]</scope>
    <scope>PROTEIN SEQUENCE OF 2-28</scope>
    <scope>DISRUPTION PHENOTYPE</scope>
    <source>
        <strain>168</strain>
    </source>
</reference>
<reference key="2">
    <citation type="journal article" date="1997" name="Microbiology">
        <title>The Bacillus subtilis genome from gerBC (311 degrees) to licR (334 degrees).</title>
        <authorList>
            <person name="Presecan E."/>
            <person name="Moszer I."/>
            <person name="Boursier L."/>
            <person name="Cruz Ramos H."/>
            <person name="De La Fuente V."/>
            <person name="Hullo M.-F."/>
            <person name="Lelong C."/>
            <person name="Schleich S."/>
            <person name="Sekowska A."/>
            <person name="Song B.H."/>
            <person name="Villani G."/>
            <person name="Kunst F."/>
            <person name="Danchin A."/>
            <person name="Glaser P."/>
        </authorList>
    </citation>
    <scope>NUCLEOTIDE SEQUENCE [GENOMIC DNA]</scope>
    <source>
        <strain>168</strain>
    </source>
</reference>
<reference key="3">
    <citation type="journal article" date="1997" name="Nature">
        <title>The complete genome sequence of the Gram-positive bacterium Bacillus subtilis.</title>
        <authorList>
            <person name="Kunst F."/>
            <person name="Ogasawara N."/>
            <person name="Moszer I."/>
            <person name="Albertini A.M."/>
            <person name="Alloni G."/>
            <person name="Azevedo V."/>
            <person name="Bertero M.G."/>
            <person name="Bessieres P."/>
            <person name="Bolotin A."/>
            <person name="Borchert S."/>
            <person name="Borriss R."/>
            <person name="Boursier L."/>
            <person name="Brans A."/>
            <person name="Braun M."/>
            <person name="Brignell S.C."/>
            <person name="Bron S."/>
            <person name="Brouillet S."/>
            <person name="Bruschi C.V."/>
            <person name="Caldwell B."/>
            <person name="Capuano V."/>
            <person name="Carter N.M."/>
            <person name="Choi S.-K."/>
            <person name="Codani J.-J."/>
            <person name="Connerton I.F."/>
            <person name="Cummings N.J."/>
            <person name="Daniel R.A."/>
            <person name="Denizot F."/>
            <person name="Devine K.M."/>
            <person name="Duesterhoeft A."/>
            <person name="Ehrlich S.D."/>
            <person name="Emmerson P.T."/>
            <person name="Entian K.-D."/>
            <person name="Errington J."/>
            <person name="Fabret C."/>
            <person name="Ferrari E."/>
            <person name="Foulger D."/>
            <person name="Fritz C."/>
            <person name="Fujita M."/>
            <person name="Fujita Y."/>
            <person name="Fuma S."/>
            <person name="Galizzi A."/>
            <person name="Galleron N."/>
            <person name="Ghim S.-Y."/>
            <person name="Glaser P."/>
            <person name="Goffeau A."/>
            <person name="Golightly E.J."/>
            <person name="Grandi G."/>
            <person name="Guiseppi G."/>
            <person name="Guy B.J."/>
            <person name="Haga K."/>
            <person name="Haiech J."/>
            <person name="Harwood C.R."/>
            <person name="Henaut A."/>
            <person name="Hilbert H."/>
            <person name="Holsappel S."/>
            <person name="Hosono S."/>
            <person name="Hullo M.-F."/>
            <person name="Itaya M."/>
            <person name="Jones L.-M."/>
            <person name="Joris B."/>
            <person name="Karamata D."/>
            <person name="Kasahara Y."/>
            <person name="Klaerr-Blanchard M."/>
            <person name="Klein C."/>
            <person name="Kobayashi Y."/>
            <person name="Koetter P."/>
            <person name="Koningstein G."/>
            <person name="Krogh S."/>
            <person name="Kumano M."/>
            <person name="Kurita K."/>
            <person name="Lapidus A."/>
            <person name="Lardinois S."/>
            <person name="Lauber J."/>
            <person name="Lazarevic V."/>
            <person name="Lee S.-M."/>
            <person name="Levine A."/>
            <person name="Liu H."/>
            <person name="Masuda S."/>
            <person name="Mauel C."/>
            <person name="Medigue C."/>
            <person name="Medina N."/>
            <person name="Mellado R.P."/>
            <person name="Mizuno M."/>
            <person name="Moestl D."/>
            <person name="Nakai S."/>
            <person name="Noback M."/>
            <person name="Noone D."/>
            <person name="O'Reilly M."/>
            <person name="Ogawa K."/>
            <person name="Ogiwara A."/>
            <person name="Oudega B."/>
            <person name="Park S.-H."/>
            <person name="Parro V."/>
            <person name="Pohl T.M."/>
            <person name="Portetelle D."/>
            <person name="Porwollik S."/>
            <person name="Prescott A.M."/>
            <person name="Presecan E."/>
            <person name="Pujic P."/>
            <person name="Purnelle B."/>
            <person name="Rapoport G."/>
            <person name="Rey M."/>
            <person name="Reynolds S."/>
            <person name="Rieger M."/>
            <person name="Rivolta C."/>
            <person name="Rocha E."/>
            <person name="Roche B."/>
            <person name="Rose M."/>
            <person name="Sadaie Y."/>
            <person name="Sato T."/>
            <person name="Scanlan E."/>
            <person name="Schleich S."/>
            <person name="Schroeter R."/>
            <person name="Scoffone F."/>
            <person name="Sekiguchi J."/>
            <person name="Sekowska A."/>
            <person name="Seror S.J."/>
            <person name="Serror P."/>
            <person name="Shin B.-S."/>
            <person name="Soldo B."/>
            <person name="Sorokin A."/>
            <person name="Tacconi E."/>
            <person name="Takagi T."/>
            <person name="Takahashi H."/>
            <person name="Takemaru K."/>
            <person name="Takeuchi M."/>
            <person name="Tamakoshi A."/>
            <person name="Tanaka T."/>
            <person name="Terpstra P."/>
            <person name="Tognoni A."/>
            <person name="Tosato V."/>
            <person name="Uchiyama S."/>
            <person name="Vandenbol M."/>
            <person name="Vannier F."/>
            <person name="Vassarotti A."/>
            <person name="Viari A."/>
            <person name="Wambutt R."/>
            <person name="Wedler E."/>
            <person name="Wedler H."/>
            <person name="Weitzenegger T."/>
            <person name="Winters P."/>
            <person name="Wipat A."/>
            <person name="Yamamoto H."/>
            <person name="Yamane K."/>
            <person name="Yasumoto K."/>
            <person name="Yata K."/>
            <person name="Yoshida K."/>
            <person name="Yoshikawa H.-F."/>
            <person name="Zumstein E."/>
            <person name="Yoshikawa H."/>
            <person name="Danchin A."/>
        </authorList>
    </citation>
    <scope>NUCLEOTIDE SEQUENCE [LARGE SCALE GENOMIC DNA]</scope>
    <source>
        <strain>168</strain>
    </source>
</reference>
<reference key="4">
    <citation type="journal article" date="1988" name="J. Bacteriol.">
        <title>Complete sequence and transcriptional analysis of the spo0F region of the Bacillus subtilis chromosome.</title>
        <authorList>
            <person name="Trach K."/>
            <person name="Chapman J.W."/>
            <person name="Piggot P.J."/>
            <person name="Lecoq D."/>
            <person name="Hoch J.A."/>
        </authorList>
    </citation>
    <scope>NUCLEOTIDE SEQUENCE [GENOMIC DNA] OF 143-173</scope>
    <source>
        <strain>168 / JH642</strain>
    </source>
</reference>
<reference key="5">
    <citation type="journal article" date="1982" name="J. Bacteriol.">
        <title>Interchangeability of delta subunits of RNA polymerase from different species of the genus Bacillus.</title>
        <authorList>
            <person name="Achberger E.C."/>
            <person name="Tahara M."/>
            <person name="Whiteley H.R."/>
        </authorList>
    </citation>
    <scope>SUBUNIT</scope>
    <source>
        <strain>168</strain>
    </source>
</reference>
<reference key="6">
    <citation type="journal article" date="1995" name="J. Mol. Biol.">
        <title>Structural analysis of the Bacillus subtilis delta factor: a protein polyanion which displaces RNA from RNA polymerase.</title>
        <authorList>
            <person name="Lopez de Saro F.J."/>
            <person name="Woody A.Y."/>
            <person name="Helmann J.D."/>
        </authorList>
    </citation>
    <scope>CHARACTERIZATION</scope>
</reference>
<reference key="7">
    <citation type="journal article" date="1999" name="J. Biol. Chem.">
        <title>Expression, abundance, and RNA polymerase binding properties of the delta factor of Bacillus subtilis.</title>
        <authorList>
            <person name="Lopez de Saro F.J."/>
            <person name="Yoshikawa N."/>
            <person name="Helmann J.D."/>
        </authorList>
    </citation>
    <scope>CHARACTERIZATION</scope>
</reference>
<reference key="8">
    <citation type="journal article" date="2008" name="Protein Expr. Purif.">
        <title>Overproduction and purification of recombinant Bacillus subtilis RNA polymerase.</title>
        <authorList>
            <person name="Yang X."/>
            <person name="Lewis P.J."/>
        </authorList>
    </citation>
    <scope>FUNCTION</scope>
    <scope>SUBUNIT</scope>
    <source>
        <strain>BS200</strain>
    </source>
</reference>
<reference key="9">
    <citation type="journal article" date="2011" name="Proteomics">
        <title>The dynamic protein partnership of RNA polymerase in Bacillus subtilis.</title>
        <authorList>
            <person name="Delumeau O."/>
            <person name="Lecointe F."/>
            <person name="Muntel J."/>
            <person name="Guillot A."/>
            <person name="Guedon E."/>
            <person name="Monnet V."/>
            <person name="Hecker M."/>
            <person name="Becher D."/>
            <person name="Polard P."/>
            <person name="Noirot P."/>
        </authorList>
    </citation>
    <scope>SUBUNIT</scope>
    <source>
        <strain>168</strain>
    </source>
</reference>
<name>RPOE_BACSU</name>
<keyword id="KW-0002">3D-structure</keyword>
<keyword id="KW-0903">Direct protein sequencing</keyword>
<keyword id="KW-0240">DNA-directed RNA polymerase</keyword>
<keyword id="KW-0548">Nucleotidyltransferase</keyword>
<keyword id="KW-1185">Reference proteome</keyword>
<keyword id="KW-0804">Transcription</keyword>
<keyword id="KW-0808">Transferase</keyword>
<protein>
    <recommendedName>
        <fullName>DNA-directed RNA polymerase subunit delta</fullName>
    </recommendedName>
    <alternativeName>
        <fullName>RNAP delta factor</fullName>
    </alternativeName>
</protein>